<evidence type="ECO:0000255" key="1">
    <source>
        <dbReference type="HAMAP-Rule" id="MF_00502"/>
    </source>
</evidence>
<evidence type="ECO:0000305" key="2"/>
<name>RL31B_EXISA</name>
<protein>
    <recommendedName>
        <fullName evidence="1">Large ribosomal subunit protein bL31B</fullName>
    </recommendedName>
    <alternativeName>
        <fullName evidence="2">50S ribosomal protein L31 type B</fullName>
    </alternativeName>
</protein>
<feature type="chain" id="PRO_1000206531" description="Large ribosomal subunit protein bL31B">
    <location>
        <begin position="1"/>
        <end position="80"/>
    </location>
</feature>
<comment type="subunit">
    <text evidence="1">Part of the 50S ribosomal subunit.</text>
</comment>
<comment type="similarity">
    <text evidence="1">Belongs to the bacterial ribosomal protein bL31 family. Type B subfamily.</text>
</comment>
<dbReference type="EMBL" id="CP001615">
    <property type="protein sequence ID" value="ACQ70268.1"/>
    <property type="molecule type" value="Genomic_DNA"/>
</dbReference>
<dbReference type="RefSeq" id="WP_012727387.1">
    <property type="nucleotide sequence ID" value="NZ_MOEL01000015.1"/>
</dbReference>
<dbReference type="SMR" id="C4KYV5"/>
<dbReference type="STRING" id="360911.EAT1b_1341"/>
<dbReference type="KEGG" id="eat:EAT1b_1341"/>
<dbReference type="eggNOG" id="COG0254">
    <property type="taxonomic scope" value="Bacteria"/>
</dbReference>
<dbReference type="HOGENOM" id="CLU_114306_2_2_9"/>
<dbReference type="OrthoDB" id="9803251at2"/>
<dbReference type="Proteomes" id="UP000000716">
    <property type="component" value="Chromosome"/>
</dbReference>
<dbReference type="GO" id="GO:1990904">
    <property type="term" value="C:ribonucleoprotein complex"/>
    <property type="evidence" value="ECO:0007669"/>
    <property type="project" value="UniProtKB-KW"/>
</dbReference>
<dbReference type="GO" id="GO:0005840">
    <property type="term" value="C:ribosome"/>
    <property type="evidence" value="ECO:0007669"/>
    <property type="project" value="UniProtKB-KW"/>
</dbReference>
<dbReference type="GO" id="GO:0003735">
    <property type="term" value="F:structural constituent of ribosome"/>
    <property type="evidence" value="ECO:0007669"/>
    <property type="project" value="InterPro"/>
</dbReference>
<dbReference type="GO" id="GO:0006412">
    <property type="term" value="P:translation"/>
    <property type="evidence" value="ECO:0007669"/>
    <property type="project" value="UniProtKB-UniRule"/>
</dbReference>
<dbReference type="Gene3D" id="4.10.830.30">
    <property type="entry name" value="Ribosomal protein L31"/>
    <property type="match status" value="1"/>
</dbReference>
<dbReference type="HAMAP" id="MF_00502">
    <property type="entry name" value="Ribosomal_bL31_2"/>
    <property type="match status" value="1"/>
</dbReference>
<dbReference type="InterPro" id="IPR034704">
    <property type="entry name" value="Ribosomal_bL28/bL31-like_sf"/>
</dbReference>
<dbReference type="InterPro" id="IPR002150">
    <property type="entry name" value="Ribosomal_bL31"/>
</dbReference>
<dbReference type="InterPro" id="IPR027493">
    <property type="entry name" value="Ribosomal_bL31_B"/>
</dbReference>
<dbReference type="InterPro" id="IPR042105">
    <property type="entry name" value="Ribosomal_bL31_sf"/>
</dbReference>
<dbReference type="NCBIfam" id="TIGR00105">
    <property type="entry name" value="L31"/>
    <property type="match status" value="1"/>
</dbReference>
<dbReference type="NCBIfam" id="NF002462">
    <property type="entry name" value="PRK01678.1"/>
    <property type="match status" value="1"/>
</dbReference>
<dbReference type="PANTHER" id="PTHR33280">
    <property type="entry name" value="50S RIBOSOMAL PROTEIN L31, CHLOROPLASTIC"/>
    <property type="match status" value="1"/>
</dbReference>
<dbReference type="PANTHER" id="PTHR33280:SF1">
    <property type="entry name" value="LARGE RIBOSOMAL SUBUNIT PROTEIN BL31C"/>
    <property type="match status" value="1"/>
</dbReference>
<dbReference type="Pfam" id="PF01197">
    <property type="entry name" value="Ribosomal_L31"/>
    <property type="match status" value="1"/>
</dbReference>
<dbReference type="PRINTS" id="PR01249">
    <property type="entry name" value="RIBOSOMALL31"/>
</dbReference>
<dbReference type="SUPFAM" id="SSF143800">
    <property type="entry name" value="L28p-like"/>
    <property type="match status" value="1"/>
</dbReference>
<dbReference type="PROSITE" id="PS01143">
    <property type="entry name" value="RIBOSOMAL_L31"/>
    <property type="match status" value="1"/>
</dbReference>
<reference key="1">
    <citation type="journal article" date="2011" name="J. Bacteriol.">
        <title>Complete genome sequence of the Thermophilic Bacterium Exiguobacterium sp. AT1b.</title>
        <authorList>
            <person name="Vishnivetskaya T.A."/>
            <person name="Lucas S."/>
            <person name="Copeland A."/>
            <person name="Lapidus A."/>
            <person name="Glavina del Rio T."/>
            <person name="Dalin E."/>
            <person name="Tice H."/>
            <person name="Bruce D.C."/>
            <person name="Goodwin L.A."/>
            <person name="Pitluck S."/>
            <person name="Saunders E."/>
            <person name="Brettin T."/>
            <person name="Detter C."/>
            <person name="Han C."/>
            <person name="Larimer F."/>
            <person name="Land M.L."/>
            <person name="Hauser L.J."/>
            <person name="Kyrpides N.C."/>
            <person name="Ovchinnikova G."/>
            <person name="Kathariou S."/>
            <person name="Ramaley R.F."/>
            <person name="Rodrigues D.F."/>
            <person name="Hendrix C."/>
            <person name="Richardson P."/>
            <person name="Tiedje J.M."/>
        </authorList>
    </citation>
    <scope>NUCLEOTIDE SEQUENCE [LARGE SCALE GENOMIC DNA]</scope>
    <source>
        <strain>ATCC BAA-1283 / AT1b</strain>
    </source>
</reference>
<sequence>MKQGIHPEYRKVVFMDSTTEFKFITGSTRYSNETITMEDGNEYPLIRVDVSSDSHPFYTGRQKFASADGRIERFNKKYQR</sequence>
<proteinExistence type="inferred from homology"/>
<gene>
    <name evidence="1" type="primary">rpmE2</name>
    <name type="ordered locus">EAT1b_1341</name>
</gene>
<accession>C4KYV5</accession>
<organism>
    <name type="scientific">Exiguobacterium sp. (strain ATCC BAA-1283 / AT1b)</name>
    <dbReference type="NCBI Taxonomy" id="360911"/>
    <lineage>
        <taxon>Bacteria</taxon>
        <taxon>Bacillati</taxon>
        <taxon>Bacillota</taxon>
        <taxon>Bacilli</taxon>
        <taxon>Bacillales</taxon>
        <taxon>Bacillales Family XII. Incertae Sedis</taxon>
        <taxon>Exiguobacterium</taxon>
    </lineage>
</organism>
<keyword id="KW-0687">Ribonucleoprotein</keyword>
<keyword id="KW-0689">Ribosomal protein</keyword>